<gene>
    <name evidence="1" type="primary">gatA</name>
    <name type="ordered locus">TGRD_132</name>
</gene>
<reference key="1">
    <citation type="journal article" date="2008" name="Proc. Natl. Acad. Sci. U.S.A.">
        <title>Complete genome of the uncultured termite group 1 bacteria in a single host protist cell.</title>
        <authorList>
            <person name="Hongoh Y."/>
            <person name="Sharma V.K."/>
            <person name="Prakash T."/>
            <person name="Noda S."/>
            <person name="Taylor T.D."/>
            <person name="Kudo T."/>
            <person name="Sakaki Y."/>
            <person name="Toyoda A."/>
            <person name="Hattori M."/>
            <person name="Ohkuma M."/>
        </authorList>
    </citation>
    <scope>NUCLEOTIDE SEQUENCE [LARGE SCALE GENOMIC DNA]</scope>
</reference>
<comment type="function">
    <text evidence="1">Allows the formation of correctly charged Gln-tRNA(Gln) through the transamidation of misacylated Glu-tRNA(Gln) in organisms which lack glutaminyl-tRNA synthetase. The reaction takes place in the presence of glutamine and ATP through an activated gamma-phospho-Glu-tRNA(Gln).</text>
</comment>
<comment type="catalytic activity">
    <reaction evidence="1">
        <text>L-glutamyl-tRNA(Gln) + L-glutamine + ATP + H2O = L-glutaminyl-tRNA(Gln) + L-glutamate + ADP + phosphate + H(+)</text>
        <dbReference type="Rhea" id="RHEA:17521"/>
        <dbReference type="Rhea" id="RHEA-COMP:9681"/>
        <dbReference type="Rhea" id="RHEA-COMP:9684"/>
        <dbReference type="ChEBI" id="CHEBI:15377"/>
        <dbReference type="ChEBI" id="CHEBI:15378"/>
        <dbReference type="ChEBI" id="CHEBI:29985"/>
        <dbReference type="ChEBI" id="CHEBI:30616"/>
        <dbReference type="ChEBI" id="CHEBI:43474"/>
        <dbReference type="ChEBI" id="CHEBI:58359"/>
        <dbReference type="ChEBI" id="CHEBI:78520"/>
        <dbReference type="ChEBI" id="CHEBI:78521"/>
        <dbReference type="ChEBI" id="CHEBI:456216"/>
        <dbReference type="EC" id="6.3.5.7"/>
    </reaction>
</comment>
<comment type="subunit">
    <text evidence="1">Heterotrimer of A, B and C subunits.</text>
</comment>
<comment type="similarity">
    <text evidence="1">Belongs to the amidase family. GatA subfamily.</text>
</comment>
<feature type="chain" id="PRO_1000122498" description="Glutamyl-tRNA(Gln) amidotransferase subunit A">
    <location>
        <begin position="1"/>
        <end position="485"/>
    </location>
</feature>
<feature type="active site" description="Charge relay system" evidence="1">
    <location>
        <position position="80"/>
    </location>
</feature>
<feature type="active site" description="Charge relay system" evidence="1">
    <location>
        <position position="155"/>
    </location>
</feature>
<feature type="active site" description="Acyl-ester intermediate" evidence="1">
    <location>
        <position position="179"/>
    </location>
</feature>
<evidence type="ECO:0000255" key="1">
    <source>
        <dbReference type="HAMAP-Rule" id="MF_00120"/>
    </source>
</evidence>
<name>GATA_ENDTX</name>
<dbReference type="EC" id="6.3.5.7" evidence="1"/>
<dbReference type="EMBL" id="AP009510">
    <property type="protein sequence ID" value="BAG13615.1"/>
    <property type="molecule type" value="Genomic_DNA"/>
</dbReference>
<dbReference type="RefSeq" id="WP_015423144.1">
    <property type="nucleotide sequence ID" value="NC_020419.1"/>
</dbReference>
<dbReference type="SMR" id="B1GZD3"/>
<dbReference type="STRING" id="471821.TGRD_132"/>
<dbReference type="KEGG" id="rsd:TGRD_132"/>
<dbReference type="PATRIC" id="fig|471821.5.peg.186"/>
<dbReference type="HOGENOM" id="CLU_009600_0_3_0"/>
<dbReference type="Proteomes" id="UP000001691">
    <property type="component" value="Chromosome"/>
</dbReference>
<dbReference type="GO" id="GO:0030956">
    <property type="term" value="C:glutamyl-tRNA(Gln) amidotransferase complex"/>
    <property type="evidence" value="ECO:0007669"/>
    <property type="project" value="InterPro"/>
</dbReference>
<dbReference type="GO" id="GO:0005524">
    <property type="term" value="F:ATP binding"/>
    <property type="evidence" value="ECO:0007669"/>
    <property type="project" value="UniProtKB-KW"/>
</dbReference>
<dbReference type="GO" id="GO:0050567">
    <property type="term" value="F:glutaminyl-tRNA synthase (glutamine-hydrolyzing) activity"/>
    <property type="evidence" value="ECO:0007669"/>
    <property type="project" value="UniProtKB-UniRule"/>
</dbReference>
<dbReference type="GO" id="GO:0006412">
    <property type="term" value="P:translation"/>
    <property type="evidence" value="ECO:0007669"/>
    <property type="project" value="UniProtKB-UniRule"/>
</dbReference>
<dbReference type="Gene3D" id="3.90.1300.10">
    <property type="entry name" value="Amidase signature (AS) domain"/>
    <property type="match status" value="1"/>
</dbReference>
<dbReference type="HAMAP" id="MF_00120">
    <property type="entry name" value="GatA"/>
    <property type="match status" value="1"/>
</dbReference>
<dbReference type="InterPro" id="IPR000120">
    <property type="entry name" value="Amidase"/>
</dbReference>
<dbReference type="InterPro" id="IPR020556">
    <property type="entry name" value="Amidase_CS"/>
</dbReference>
<dbReference type="InterPro" id="IPR023631">
    <property type="entry name" value="Amidase_dom"/>
</dbReference>
<dbReference type="InterPro" id="IPR036928">
    <property type="entry name" value="AS_sf"/>
</dbReference>
<dbReference type="InterPro" id="IPR004412">
    <property type="entry name" value="GatA"/>
</dbReference>
<dbReference type="NCBIfam" id="TIGR00132">
    <property type="entry name" value="gatA"/>
    <property type="match status" value="1"/>
</dbReference>
<dbReference type="PANTHER" id="PTHR11895:SF151">
    <property type="entry name" value="GLUTAMYL-TRNA(GLN) AMIDOTRANSFERASE SUBUNIT A"/>
    <property type="match status" value="1"/>
</dbReference>
<dbReference type="PANTHER" id="PTHR11895">
    <property type="entry name" value="TRANSAMIDASE"/>
    <property type="match status" value="1"/>
</dbReference>
<dbReference type="Pfam" id="PF01425">
    <property type="entry name" value="Amidase"/>
    <property type="match status" value="1"/>
</dbReference>
<dbReference type="SUPFAM" id="SSF75304">
    <property type="entry name" value="Amidase signature (AS) enzymes"/>
    <property type="match status" value="1"/>
</dbReference>
<dbReference type="PROSITE" id="PS00571">
    <property type="entry name" value="AMIDASES"/>
    <property type="match status" value="1"/>
</dbReference>
<proteinExistence type="inferred from homology"/>
<accession>B1GZD3</accession>
<protein>
    <recommendedName>
        <fullName evidence="1">Glutamyl-tRNA(Gln) amidotransferase subunit A</fullName>
        <shortName evidence="1">Glu-ADT subunit A</shortName>
        <ecNumber evidence="1">6.3.5.7</ecNumber>
    </recommendedName>
</protein>
<sequence>MDEILKTRVKDLCEKIRSGQIKSIEIVKACFKRIKETDPKVKAFLKLNEERSLKQAAQSDDKIKTGAECGSLEGVPIGIKDNIMIKGESMTSASKYLENYISPYDAAVIEKLKEAGVIFVGRTNMDEFAMGGSTETSVYQKTANPWNIDYIPGGSSGGSAAAVSSGMVPFALGSDTGGSIRQPAGFCGIVGYKPSYGLISRYGACALASSFDQIGVFSKTVKDASLLTSFIAVGDYRDPVCETGEQTNYAHGIYNPDILKTVRIGIPKQLSNYKADEEITKYFGDAVNKLKLEGAATVEIDVPAYKYVPALYEVIMCAEVSANIATFDGIRYGYRSSNGRNLNDEYAKSRAESLGYEVKKRILFGTYVLGAKNYYRCYHQAQRVRTLLINQITDAYKKCDFIFSPATLQMPVKFGEKLSEECDIFLTAANLAGLPGITVPCTFTSSGMPMGVHFMGSRFSDAKLFQIADAFERISGFDINKYPNL</sequence>
<organism>
    <name type="scientific">Endomicrobium trichonymphae</name>
    <dbReference type="NCBI Taxonomy" id="1408204"/>
    <lineage>
        <taxon>Bacteria</taxon>
        <taxon>Pseudomonadati</taxon>
        <taxon>Elusimicrobiota</taxon>
        <taxon>Endomicrobiia</taxon>
        <taxon>Endomicrobiales</taxon>
        <taxon>Endomicrobiaceae</taxon>
        <taxon>Candidatus Endomicrobiellum</taxon>
    </lineage>
</organism>
<keyword id="KW-0067">ATP-binding</keyword>
<keyword id="KW-0436">Ligase</keyword>
<keyword id="KW-0547">Nucleotide-binding</keyword>
<keyword id="KW-0648">Protein biosynthesis</keyword>